<name>WECF_ECO7I</name>
<sequence>MTVLIHVLGSDIPHHNRTVLRFFNHALAATSEHAREFMVVGKDDGLSDSCPALSVQFFPGKKSLAEAVIAKAKANRQQRFFFHGQFNPTLWLALLSGGIKPSQFFWHIWGADLYELSSGLRYKLFYPLRRLAQKRVGCVFATRGDLSFFAKTHPKVRGELLYFPTRMDPSLNTMANDRQREGKMTILVGNSGDRSNEHIAALRAVHQQFGDTVKVVVPMGYPPNNEAYIEEVRQAGLELFSEENLQVLSEKLEFDAYLTLLRQCDLGYFIFARQQGIGTLCLLIQAGIPCVLNRENPFWQDMTEQHLPVLFTTDDLNEDIVREAQRQLASVDKNTIAFFSPNYLQGWQRALAIAAGEVA</sequence>
<evidence type="ECO:0000255" key="1">
    <source>
        <dbReference type="HAMAP-Rule" id="MF_01002"/>
    </source>
</evidence>
<comment type="function">
    <text evidence="1">Catalyzes the synthesis of Und-PP-GlcNAc-ManNAcA-Fuc4NAc (Lipid III), the third lipid-linked intermediate involved in ECA synthesis.</text>
</comment>
<comment type="catalytic activity">
    <reaction evidence="1">
        <text>beta-D-ManNAcA-(1-&gt;4)-alpha-D-GlcNAc-di-trans,octa-cis-undecaprenyl diphosphate + dTDP-4-acetamido-4,6-dideoxy-alpha-D-galactose = alpha-D-FucNAc4-(1-&gt;4)-beta-D-ManNAcA-(1-&gt;4)-D-GlcNAc-undecaprenyl diphosphate + dTDP + H(+)</text>
        <dbReference type="Rhea" id="RHEA:28759"/>
        <dbReference type="ChEBI" id="CHEBI:15378"/>
        <dbReference type="ChEBI" id="CHEBI:58369"/>
        <dbReference type="ChEBI" id="CHEBI:61495"/>
        <dbReference type="ChEBI" id="CHEBI:61496"/>
        <dbReference type="ChEBI" id="CHEBI:68493"/>
        <dbReference type="EC" id="2.4.1.325"/>
    </reaction>
</comment>
<comment type="pathway">
    <text evidence="1">Bacterial outer membrane biogenesis; enterobacterial common antigen biosynthesis.</text>
</comment>
<comment type="subcellular location">
    <subcellularLocation>
        <location evidence="1">Cell inner membrane</location>
        <topology evidence="1">Peripheral membrane protein</topology>
    </subcellularLocation>
</comment>
<comment type="similarity">
    <text evidence="1">Belongs to the glycosyltransferase 56 family.</text>
</comment>
<proteinExistence type="inferred from homology"/>
<keyword id="KW-0997">Cell inner membrane</keyword>
<keyword id="KW-1003">Cell membrane</keyword>
<keyword id="KW-0328">Glycosyltransferase</keyword>
<keyword id="KW-0472">Membrane</keyword>
<keyword id="KW-0808">Transferase</keyword>
<protein>
    <recommendedName>
        <fullName evidence="1">TDP-N-acetylfucosamine:lipid II N-acetylfucosaminyltransferase</fullName>
        <ecNumber evidence="1">2.4.1.325</ecNumber>
    </recommendedName>
    <alternativeName>
        <fullName evidence="1">4-alpha-L-fucosyltransferase</fullName>
    </alternativeName>
    <alternativeName>
        <fullName evidence="1">TDP-Fuc4NAc:lipid II Fuc4NAc transferase</fullName>
        <shortName evidence="1">Fuc4NAc transferase</shortName>
    </alternativeName>
</protein>
<reference key="1">
    <citation type="journal article" date="2009" name="PLoS Genet.">
        <title>Organised genome dynamics in the Escherichia coli species results in highly diverse adaptive paths.</title>
        <authorList>
            <person name="Touchon M."/>
            <person name="Hoede C."/>
            <person name="Tenaillon O."/>
            <person name="Barbe V."/>
            <person name="Baeriswyl S."/>
            <person name="Bidet P."/>
            <person name="Bingen E."/>
            <person name="Bonacorsi S."/>
            <person name="Bouchier C."/>
            <person name="Bouvet O."/>
            <person name="Calteau A."/>
            <person name="Chiapello H."/>
            <person name="Clermont O."/>
            <person name="Cruveiller S."/>
            <person name="Danchin A."/>
            <person name="Diard M."/>
            <person name="Dossat C."/>
            <person name="Karoui M.E."/>
            <person name="Frapy E."/>
            <person name="Garry L."/>
            <person name="Ghigo J.M."/>
            <person name="Gilles A.M."/>
            <person name="Johnson J."/>
            <person name="Le Bouguenec C."/>
            <person name="Lescat M."/>
            <person name="Mangenot S."/>
            <person name="Martinez-Jehanne V."/>
            <person name="Matic I."/>
            <person name="Nassif X."/>
            <person name="Oztas S."/>
            <person name="Petit M.A."/>
            <person name="Pichon C."/>
            <person name="Rouy Z."/>
            <person name="Ruf C.S."/>
            <person name="Schneider D."/>
            <person name="Tourret J."/>
            <person name="Vacherie B."/>
            <person name="Vallenet D."/>
            <person name="Medigue C."/>
            <person name="Rocha E.P.C."/>
            <person name="Denamur E."/>
        </authorList>
    </citation>
    <scope>NUCLEOTIDE SEQUENCE [LARGE SCALE GENOMIC DNA]</scope>
    <source>
        <strain>IAI39 / ExPEC</strain>
    </source>
</reference>
<feature type="chain" id="PRO_1000134596" description="TDP-N-acetylfucosamine:lipid II N-acetylfucosaminyltransferase">
    <location>
        <begin position="1"/>
        <end position="359"/>
    </location>
</feature>
<organism>
    <name type="scientific">Escherichia coli O7:K1 (strain IAI39 / ExPEC)</name>
    <dbReference type="NCBI Taxonomy" id="585057"/>
    <lineage>
        <taxon>Bacteria</taxon>
        <taxon>Pseudomonadati</taxon>
        <taxon>Pseudomonadota</taxon>
        <taxon>Gammaproteobacteria</taxon>
        <taxon>Enterobacterales</taxon>
        <taxon>Enterobacteriaceae</taxon>
        <taxon>Escherichia</taxon>
    </lineage>
</organism>
<accession>B7NTE9</accession>
<gene>
    <name evidence="1" type="primary">wecF</name>
    <name evidence="1" type="synonym">rffT</name>
    <name type="ordered locus">ECIAI39_2994</name>
</gene>
<dbReference type="EC" id="2.4.1.325" evidence="1"/>
<dbReference type="EMBL" id="CU928164">
    <property type="protein sequence ID" value="CAR19113.1"/>
    <property type="molecule type" value="Genomic_DNA"/>
</dbReference>
<dbReference type="RefSeq" id="WP_000217284.1">
    <property type="nucleotide sequence ID" value="NC_011750.1"/>
</dbReference>
<dbReference type="RefSeq" id="YP_002408922.1">
    <property type="nucleotide sequence ID" value="NC_011750.1"/>
</dbReference>
<dbReference type="SMR" id="B7NTE9"/>
<dbReference type="STRING" id="585057.ECIAI39_2994"/>
<dbReference type="CAZy" id="GT56">
    <property type="family name" value="Glycosyltransferase Family 56"/>
</dbReference>
<dbReference type="KEGG" id="ect:ECIAI39_2994"/>
<dbReference type="PATRIC" id="fig|585057.6.peg.3107"/>
<dbReference type="HOGENOM" id="CLU_066584_0_0_6"/>
<dbReference type="UniPathway" id="UPA00566"/>
<dbReference type="Proteomes" id="UP000000749">
    <property type="component" value="Chromosome"/>
</dbReference>
<dbReference type="GO" id="GO:0005886">
    <property type="term" value="C:plasma membrane"/>
    <property type="evidence" value="ECO:0007669"/>
    <property type="project" value="UniProtKB-SubCell"/>
</dbReference>
<dbReference type="GO" id="GO:0102031">
    <property type="term" value="F:4-acetamido-4,6-dideoxy-D-galactose transferase activity"/>
    <property type="evidence" value="ECO:0007669"/>
    <property type="project" value="UniProtKB-EC"/>
</dbReference>
<dbReference type="GO" id="GO:0008417">
    <property type="term" value="F:fucosyltransferase activity"/>
    <property type="evidence" value="ECO:0007669"/>
    <property type="project" value="InterPro"/>
</dbReference>
<dbReference type="GO" id="GO:0009246">
    <property type="term" value="P:enterobacterial common antigen biosynthetic process"/>
    <property type="evidence" value="ECO:0007669"/>
    <property type="project" value="UniProtKB-UniRule"/>
</dbReference>
<dbReference type="GO" id="GO:0036065">
    <property type="term" value="P:fucosylation"/>
    <property type="evidence" value="ECO:0007669"/>
    <property type="project" value="InterPro"/>
</dbReference>
<dbReference type="HAMAP" id="MF_01002">
    <property type="entry name" value="WecF_RffT"/>
    <property type="match status" value="1"/>
</dbReference>
<dbReference type="InterPro" id="IPR009993">
    <property type="entry name" value="WecF"/>
</dbReference>
<dbReference type="NCBIfam" id="NF002752">
    <property type="entry name" value="PRK02797.1-1"/>
    <property type="match status" value="1"/>
</dbReference>
<dbReference type="NCBIfam" id="NF002753">
    <property type="entry name" value="PRK02797.1-2"/>
    <property type="match status" value="1"/>
</dbReference>
<dbReference type="NCBIfam" id="NF002754">
    <property type="entry name" value="PRK02797.1-3"/>
    <property type="match status" value="1"/>
</dbReference>
<dbReference type="Pfam" id="PF07429">
    <property type="entry name" value="Glyco_transf_56"/>
    <property type="match status" value="1"/>
</dbReference>